<name>RT105_YEAS7</name>
<organism>
    <name type="scientific">Saccharomyces cerevisiae (strain YJM789)</name>
    <name type="common">Baker's yeast</name>
    <dbReference type="NCBI Taxonomy" id="307796"/>
    <lineage>
        <taxon>Eukaryota</taxon>
        <taxon>Fungi</taxon>
        <taxon>Dikarya</taxon>
        <taxon>Ascomycota</taxon>
        <taxon>Saccharomycotina</taxon>
        <taxon>Saccharomycetes</taxon>
        <taxon>Saccharomycetales</taxon>
        <taxon>Saccharomycetaceae</taxon>
        <taxon>Saccharomyces</taxon>
    </lineage>
</organism>
<gene>
    <name type="primary">RTT105</name>
    <name type="ORF">SCY_1607</name>
</gene>
<feature type="chain" id="PRO_0000320479" description="Regulator of Ty1 transposition protein 105">
    <location>
        <begin position="1"/>
        <end position="208"/>
    </location>
</feature>
<feature type="region of interest" description="Disordered" evidence="2">
    <location>
        <begin position="28"/>
        <end position="105"/>
    </location>
</feature>
<feature type="compositionally biased region" description="Polar residues" evidence="2">
    <location>
        <begin position="33"/>
        <end position="42"/>
    </location>
</feature>
<feature type="compositionally biased region" description="Low complexity" evidence="2">
    <location>
        <begin position="60"/>
        <end position="71"/>
    </location>
</feature>
<feature type="compositionally biased region" description="Basic and acidic residues" evidence="2">
    <location>
        <begin position="94"/>
        <end position="105"/>
    </location>
</feature>
<dbReference type="EMBL" id="AAFW02000048">
    <property type="protein sequence ID" value="EDN63080.1"/>
    <property type="molecule type" value="Genomic_DNA"/>
</dbReference>
<dbReference type="SMR" id="A6ZR60"/>
<dbReference type="HOGENOM" id="CLU_1469340_0_0_1"/>
<dbReference type="Proteomes" id="UP000007060">
    <property type="component" value="Unassembled WGS sequence"/>
</dbReference>
<dbReference type="GO" id="GO:0005737">
    <property type="term" value="C:cytoplasm"/>
    <property type="evidence" value="ECO:0007669"/>
    <property type="project" value="UniProtKB-SubCell"/>
</dbReference>
<dbReference type="GO" id="GO:0005634">
    <property type="term" value="C:nucleus"/>
    <property type="evidence" value="ECO:0007669"/>
    <property type="project" value="UniProtKB-SubCell"/>
</dbReference>
<dbReference type="GO" id="GO:0032196">
    <property type="term" value="P:transposition"/>
    <property type="evidence" value="ECO:0007669"/>
    <property type="project" value="UniProtKB-KW"/>
</dbReference>
<keyword id="KW-0963">Cytoplasm</keyword>
<keyword id="KW-0539">Nucleus</keyword>
<keyword id="KW-0815">Transposition</keyword>
<protein>
    <recommendedName>
        <fullName>Regulator of Ty1 transposition protein 105</fullName>
    </recommendedName>
</protein>
<evidence type="ECO:0000250" key="1"/>
<evidence type="ECO:0000256" key="2">
    <source>
        <dbReference type="SAM" id="MobiDB-lite"/>
    </source>
</evidence>
<proteinExistence type="inferred from homology"/>
<reference key="1">
    <citation type="journal article" date="2007" name="Proc. Natl. Acad. Sci. U.S.A.">
        <title>Genome sequencing and comparative analysis of Saccharomyces cerevisiae strain YJM789.</title>
        <authorList>
            <person name="Wei W."/>
            <person name="McCusker J.H."/>
            <person name="Hyman R.W."/>
            <person name="Jones T."/>
            <person name="Ning Y."/>
            <person name="Cao Z."/>
            <person name="Gu Z."/>
            <person name="Bruno D."/>
            <person name="Miranda M."/>
            <person name="Nguyen M."/>
            <person name="Wilhelmy J."/>
            <person name="Komp C."/>
            <person name="Tamse R."/>
            <person name="Wang X."/>
            <person name="Jia P."/>
            <person name="Luedi P."/>
            <person name="Oefner P.J."/>
            <person name="David L."/>
            <person name="Dietrich F.S."/>
            <person name="Li Y."/>
            <person name="Davis R.W."/>
            <person name="Steinmetz L.M."/>
        </authorList>
    </citation>
    <scope>NUCLEOTIDE SEQUENCE [LARGE SCALE GENOMIC DNA]</scope>
    <source>
        <strain>YJM789</strain>
    </source>
</reference>
<comment type="function">
    <text evidence="1">Involved in regulation of Ty1 transposition. Inhibits Ty1 transposition at a post-transcriptional and pre-integrational stage of the Ty1 retrotransposition cycle (By similarity).</text>
</comment>
<comment type="subcellular location">
    <subcellularLocation>
        <location evidence="1">Cytoplasm</location>
    </subcellularLocation>
    <subcellularLocation>
        <location evidence="1">Nucleus</location>
    </subcellularLocation>
</comment>
<accession>A6ZR60</accession>
<sequence length="208" mass="24413">MYSNHNLNSDDCCFDWNEEKAAELQRTGVSFDRSLTPQSLRTSTRRLSEENKQQSGTMHIDTSPSVVSDIISSRRDRSQDFFGPHSSSPIAPSERQRADQRSRLESMRLTRRRDKMTKVRGGLEKMEEMIMQGEHLREMQRLKQEAQKNALPSDMAEYMEWQNNEDLEDDELLAFIEKQETYKNELEHFLNNANKNVYENNSYPNSHT</sequence>